<comment type="function">
    <text evidence="1">Peptide chain release factor 1 directs the termination of translation in response to the peptide chain termination codons UAG and UAA.</text>
</comment>
<comment type="subcellular location">
    <subcellularLocation>
        <location evidence="1">Cytoplasm</location>
    </subcellularLocation>
</comment>
<comment type="PTM">
    <text evidence="1">Methylated by PrmC. Methylation increases the termination efficiency of RF1 (By similarity).</text>
</comment>
<comment type="similarity">
    <text evidence="3">Belongs to the prokaryotic/mitochondrial release factor family.</text>
</comment>
<comment type="sequence caution" evidence="3">
    <conflict type="erroneous initiation">
        <sequence resource="EMBL-CDS" id="AAC23209"/>
    </conflict>
</comment>
<gene>
    <name type="primary">prfA</name>
    <name type="ordered locus">HI_1561</name>
</gene>
<keyword id="KW-0963">Cytoplasm</keyword>
<keyword id="KW-0488">Methylation</keyword>
<keyword id="KW-0648">Protein biosynthesis</keyword>
<keyword id="KW-1185">Reference proteome</keyword>
<protein>
    <recommendedName>
        <fullName>Peptide chain release factor 1</fullName>
        <shortName>RF-1</shortName>
    </recommendedName>
</protein>
<evidence type="ECO:0000250" key="1"/>
<evidence type="ECO:0000256" key="2">
    <source>
        <dbReference type="SAM" id="MobiDB-lite"/>
    </source>
</evidence>
<evidence type="ECO:0000305" key="3"/>
<feature type="chain" id="PRO_0000177679" description="Peptide chain release factor 1">
    <location>
        <begin position="1"/>
        <end position="360"/>
    </location>
</feature>
<feature type="region of interest" description="Disordered" evidence="2">
    <location>
        <begin position="285"/>
        <end position="309"/>
    </location>
</feature>
<feature type="compositionally biased region" description="Basic and acidic residues" evidence="2">
    <location>
        <begin position="285"/>
        <end position="295"/>
    </location>
</feature>
<feature type="modified residue" description="N5-methylglutamine" evidence="1">
    <location>
        <position position="235"/>
    </location>
</feature>
<reference key="1">
    <citation type="journal article" date="1995" name="Science">
        <title>Whole-genome random sequencing and assembly of Haemophilus influenzae Rd.</title>
        <authorList>
            <person name="Fleischmann R.D."/>
            <person name="Adams M.D."/>
            <person name="White O."/>
            <person name="Clayton R.A."/>
            <person name="Kirkness E.F."/>
            <person name="Kerlavage A.R."/>
            <person name="Bult C.J."/>
            <person name="Tomb J.-F."/>
            <person name="Dougherty B.A."/>
            <person name="Merrick J.M."/>
            <person name="McKenney K."/>
            <person name="Sutton G.G."/>
            <person name="FitzHugh W."/>
            <person name="Fields C.A."/>
            <person name="Gocayne J.D."/>
            <person name="Scott J.D."/>
            <person name="Shirley R."/>
            <person name="Liu L.-I."/>
            <person name="Glodek A."/>
            <person name="Kelley J.M."/>
            <person name="Weidman J.F."/>
            <person name="Phillips C.A."/>
            <person name="Spriggs T."/>
            <person name="Hedblom E."/>
            <person name="Cotton M.D."/>
            <person name="Utterback T.R."/>
            <person name="Hanna M.C."/>
            <person name="Nguyen D.T."/>
            <person name="Saudek D.M."/>
            <person name="Brandon R.C."/>
            <person name="Fine L.D."/>
            <person name="Fritchman J.L."/>
            <person name="Fuhrmann J.L."/>
            <person name="Geoghagen N.S.M."/>
            <person name="Gnehm C.L."/>
            <person name="McDonald L.A."/>
            <person name="Small K.V."/>
            <person name="Fraser C.M."/>
            <person name="Smith H.O."/>
            <person name="Venter J.C."/>
        </authorList>
    </citation>
    <scope>NUCLEOTIDE SEQUENCE [LARGE SCALE GENOMIC DNA]</scope>
    <source>
        <strain>ATCC 51907 / DSM 11121 / KW20 / Rd</strain>
    </source>
</reference>
<dbReference type="EMBL" id="L42023">
    <property type="protein sequence ID" value="AAC23209.1"/>
    <property type="status" value="ALT_INIT"/>
    <property type="molecule type" value="Genomic_DNA"/>
</dbReference>
<dbReference type="PIR" id="I64129">
    <property type="entry name" value="I64129"/>
</dbReference>
<dbReference type="RefSeq" id="NP_439710.1">
    <property type="nucleotide sequence ID" value="NC_000907.1"/>
</dbReference>
<dbReference type="SMR" id="P43917"/>
<dbReference type="STRING" id="71421.HI_1561"/>
<dbReference type="EnsemblBacteria" id="AAC23209">
    <property type="protein sequence ID" value="AAC23209"/>
    <property type="gene ID" value="HI_1561"/>
</dbReference>
<dbReference type="KEGG" id="hin:HI_1561"/>
<dbReference type="PATRIC" id="fig|71421.8.peg.1632"/>
<dbReference type="eggNOG" id="COG0216">
    <property type="taxonomic scope" value="Bacteria"/>
</dbReference>
<dbReference type="HOGENOM" id="CLU_036856_0_1_6"/>
<dbReference type="OrthoDB" id="9806673at2"/>
<dbReference type="PhylomeDB" id="P43917"/>
<dbReference type="Proteomes" id="UP000000579">
    <property type="component" value="Chromosome"/>
</dbReference>
<dbReference type="GO" id="GO:0005737">
    <property type="term" value="C:cytoplasm"/>
    <property type="evidence" value="ECO:0007669"/>
    <property type="project" value="UniProtKB-SubCell"/>
</dbReference>
<dbReference type="GO" id="GO:0016149">
    <property type="term" value="F:translation release factor activity, codon specific"/>
    <property type="evidence" value="ECO:0007669"/>
    <property type="project" value="UniProtKB-UniRule"/>
</dbReference>
<dbReference type="FunFam" id="3.30.160.20:FF:000004">
    <property type="entry name" value="Peptide chain release factor 1"/>
    <property type="match status" value="1"/>
</dbReference>
<dbReference type="FunFam" id="3.30.70.1660:FF:000002">
    <property type="entry name" value="Peptide chain release factor 1"/>
    <property type="match status" value="1"/>
</dbReference>
<dbReference type="FunFam" id="3.30.70.1660:FF:000004">
    <property type="entry name" value="Peptide chain release factor 1"/>
    <property type="match status" value="1"/>
</dbReference>
<dbReference type="Gene3D" id="3.30.160.20">
    <property type="match status" value="1"/>
</dbReference>
<dbReference type="Gene3D" id="3.30.70.1660">
    <property type="match status" value="1"/>
</dbReference>
<dbReference type="Gene3D" id="6.10.140.1950">
    <property type="match status" value="1"/>
</dbReference>
<dbReference type="HAMAP" id="MF_00093">
    <property type="entry name" value="Rel_fac_1"/>
    <property type="match status" value="1"/>
</dbReference>
<dbReference type="InterPro" id="IPR005139">
    <property type="entry name" value="PCRF"/>
</dbReference>
<dbReference type="InterPro" id="IPR000352">
    <property type="entry name" value="Pep_chain_release_fac_I"/>
</dbReference>
<dbReference type="InterPro" id="IPR045853">
    <property type="entry name" value="Pep_chain_release_fac_I_sf"/>
</dbReference>
<dbReference type="InterPro" id="IPR050057">
    <property type="entry name" value="Prokaryotic/Mito_RF"/>
</dbReference>
<dbReference type="InterPro" id="IPR004373">
    <property type="entry name" value="RF-1"/>
</dbReference>
<dbReference type="NCBIfam" id="TIGR00019">
    <property type="entry name" value="prfA"/>
    <property type="match status" value="1"/>
</dbReference>
<dbReference type="NCBIfam" id="NF001859">
    <property type="entry name" value="PRK00591.1"/>
    <property type="match status" value="1"/>
</dbReference>
<dbReference type="PANTHER" id="PTHR43804">
    <property type="entry name" value="LD18447P"/>
    <property type="match status" value="1"/>
</dbReference>
<dbReference type="PANTHER" id="PTHR43804:SF7">
    <property type="entry name" value="LD18447P"/>
    <property type="match status" value="1"/>
</dbReference>
<dbReference type="Pfam" id="PF03462">
    <property type="entry name" value="PCRF"/>
    <property type="match status" value="1"/>
</dbReference>
<dbReference type="Pfam" id="PF00472">
    <property type="entry name" value="RF-1"/>
    <property type="match status" value="1"/>
</dbReference>
<dbReference type="SMART" id="SM00937">
    <property type="entry name" value="PCRF"/>
    <property type="match status" value="1"/>
</dbReference>
<dbReference type="SUPFAM" id="SSF75620">
    <property type="entry name" value="Release factor"/>
    <property type="match status" value="1"/>
</dbReference>
<dbReference type="PROSITE" id="PS00745">
    <property type="entry name" value="RF_PROK_I"/>
    <property type="match status" value="1"/>
</dbReference>
<proteinExistence type="inferred from homology"/>
<accession>P43917</accession>
<sequence>MKDSIIAKLESLKERYEELEALLGDVSVISDQDKFRAYSKEYSQLEEVVKCFNRWTQLNQNIEEAEILLDDPEMKEMAQMEIEESKAEIEEVEQQLQILLLPKDPNDEYNCYLEIRAGTGGDEAGIFAGDLFRMYSRYAESKRWRVEMLSANESEQGGYKEVIVKVTGEGVYGQLKFESGGHRVQRVPKTESQGRIHTSACTVAVMPELPESEMPEINPADLRIDTYRSSGAGGQHVNTTDSAVRITHIPTGIVVECQDERSQHKNKAKAMSVLASRIVQAEQERQAAEQTDMRRNLLGSGDRSDKIRTYNYPQGRVTDHRINLTIYRLDEVMNGKIDELIQPIITEYQADQLAALSEQN</sequence>
<name>RF1_HAEIN</name>
<organism>
    <name type="scientific">Haemophilus influenzae (strain ATCC 51907 / DSM 11121 / KW20 / Rd)</name>
    <dbReference type="NCBI Taxonomy" id="71421"/>
    <lineage>
        <taxon>Bacteria</taxon>
        <taxon>Pseudomonadati</taxon>
        <taxon>Pseudomonadota</taxon>
        <taxon>Gammaproteobacteria</taxon>
        <taxon>Pasteurellales</taxon>
        <taxon>Pasteurellaceae</taxon>
        <taxon>Haemophilus</taxon>
    </lineage>
</organism>